<name>ORCO_DROME</name>
<comment type="function">
    <text evidence="4 5 6 7 9 10 11 12 13">Odorant coreceptor which complexes with conventional odorant receptors (ORs) to form odorant-sensing units, providing sensitive and prolonged odorant signaling and calcium permeability. Orco is a universal and integral part of the functional odorant receptor, involved in the dendritic localization of other olfactory receptors. Expression of Orco alone leads to formation of rapid and transient ion channels not directly responding to odorants, but directly activated by intracellular cAMP or cGMP. Snmp, Or67d and lush act in concert to capture fatty-acid-derived male pheromone 11-cis vaccenyl acetate (cVA) molecules on the surface of Or67d expressing olfactory dendrites and facilitate their transfer to the odorant-receptor Orco complex.</text>
</comment>
<comment type="subunit">
    <text>Heterodimer with conventional odorant receptors (ORs). Complexes exist early in the endomembrane system in olfactory sensory neurons (OSNs), coupling these complexes to the conserved ciliary trafficking pathway.</text>
</comment>
<comment type="interaction">
    <interactant intactId="EBI-15562228">
        <id>Q9VNB5</id>
    </interactant>
    <interactant intactId="EBI-15562282">
        <id>P81917</id>
        <label>Or43a</label>
    </interactant>
    <organismsDiffer>false</organismsDiffer>
    <experiments>2</experiments>
</comment>
<comment type="subcellular location">
    <subcellularLocation>
        <location evidence="6">Cell membrane</location>
        <topology evidence="6">Multi-pass membrane protein</topology>
    </subcellularLocation>
</comment>
<comment type="tissue specificity">
    <text evidence="2 3 4 6 7">Expression is restricted to olfactory sensory neurons (OSNs). Coexpressed with Snmp in a lateral-distal population of OSNs. Expressed in the embryonic antennal-maxillary complex, in all 21 OSNs of the larval dorsal organ, in the pupal antennal OSNs, in all 120 adult maxillary palp neurons and in approximately 70-80% of adult antennal OSNs, where expression is highest at the dorsal-medial edge. Localized to OSN cell bodies and to the distal portion of ciliated OSN dendrites.</text>
</comment>
<comment type="developmental stage">
    <text evidence="4">Expressed throughout all developmental stages. First expressed at embryonic stage 15. Pupal expression first occurs 80 hours after puparium formation.</text>
</comment>
<comment type="miscellaneous">
    <text>The atypical heteromeric and topological design of the odorant receptors appears to be an insect-specific solution for odor recognition, making the OR/Orco complex an attractive target for the development of highly selective insect repellents to disrupt olfactory-mediated host-seeking behaviors of insect disease vectors. Odor-evoked OR currents are independent of known G-protein-coupled second messenger pathways. The homomeric Orco channel is thought to be a cyclic-nucleotide-gated ion channel that depolarizes the olfactory receptor neuron.</text>
</comment>
<comment type="similarity">
    <text evidence="14">Belongs to the insect chemoreceptor superfamily. Heteromeric odorant receptor channel (TC 1.A.69) family. Orco subfamily.</text>
</comment>
<keyword id="KW-0085">Behavior</keyword>
<keyword id="KW-1003">Cell membrane</keyword>
<keyword id="KW-0325">Glycoprotein</keyword>
<keyword id="KW-0472">Membrane</keyword>
<keyword id="KW-0552">Olfaction</keyword>
<keyword id="KW-0675">Receptor</keyword>
<keyword id="KW-1185">Reference proteome</keyword>
<keyword id="KW-0716">Sensory transduction</keyword>
<keyword id="KW-0807">Transducer</keyword>
<keyword id="KW-0812">Transmembrane</keyword>
<keyword id="KW-1133">Transmembrane helix</keyword>
<proteinExistence type="evidence at protein level"/>
<accession>Q9VNB5</accession>
<accession>A8JQT8</accession>
<accession>Q672R0</accession>
<feature type="chain" id="PRO_0000174272" description="Odorant receptor coreceptor">
    <location>
        <begin position="1"/>
        <end position="486"/>
    </location>
</feature>
<feature type="topological domain" description="Cytoplasmic" evidence="15">
    <location>
        <begin position="1"/>
        <end position="47"/>
    </location>
</feature>
<feature type="transmembrane region" description="Helical; Name=1" evidence="1">
    <location>
        <begin position="48"/>
        <end position="68"/>
    </location>
</feature>
<feature type="topological domain" description="Extracellular" evidence="15">
    <location>
        <begin position="69"/>
        <end position="75"/>
    </location>
</feature>
<feature type="transmembrane region" description="Helical; Name=2" evidence="1">
    <location>
        <begin position="76"/>
        <end position="96"/>
    </location>
</feature>
<feature type="topological domain" description="Cytoplasmic" evidence="15">
    <location>
        <begin position="97"/>
        <end position="135"/>
    </location>
</feature>
<feature type="transmembrane region" description="Helical; Name=3" evidence="1">
    <location>
        <begin position="136"/>
        <end position="156"/>
    </location>
</feature>
<feature type="topological domain" description="Extracellular" evidence="15">
    <location>
        <begin position="157"/>
        <end position="191"/>
    </location>
</feature>
<feature type="transmembrane region" description="Helical; Name=4" evidence="1">
    <location>
        <begin position="192"/>
        <end position="212"/>
    </location>
</feature>
<feature type="topological domain" description="Cytoplasmic" evidence="15">
    <location>
        <begin position="213"/>
        <end position="351"/>
    </location>
</feature>
<feature type="transmembrane region" description="Helical; Name=5" evidence="1">
    <location>
        <begin position="352"/>
        <end position="372"/>
    </location>
</feature>
<feature type="topological domain" description="Extracellular" evidence="15">
    <location>
        <begin position="373"/>
        <end position="390"/>
    </location>
</feature>
<feature type="transmembrane region" description="Helical; Name=6" evidence="1">
    <location>
        <begin position="391"/>
        <end position="411"/>
    </location>
</feature>
<feature type="topological domain" description="Cytoplasmic" evidence="15">
    <location>
        <begin position="412"/>
        <end position="462"/>
    </location>
</feature>
<feature type="transmembrane region" description="Helical; Name=7" evidence="1">
    <location>
        <begin position="463"/>
        <end position="483"/>
    </location>
</feature>
<feature type="topological domain" description="Extracellular" evidence="15">
    <location>
        <begin position="484"/>
        <end position="486"/>
    </location>
</feature>
<feature type="glycosylation site" description="N-linked (GlcNAc...) asparagine" evidence="8">
    <location>
        <position position="169"/>
    </location>
</feature>
<feature type="glycosylation site" description="N-linked (GlcNAc...) asparagine" evidence="1">
    <location>
        <position position="188"/>
    </location>
</feature>
<feature type="sequence variant" description="In strain: Oregon-R." evidence="4">
    <original>T</original>
    <variation>I</variation>
    <location>
        <position position="143"/>
    </location>
</feature>
<feature type="mutagenesis site" description="Destroys glycosylation site." evidence="8">
    <original>N</original>
    <variation>NQ</variation>
    <location>
        <position position="169"/>
    </location>
</feature>
<evidence type="ECO:0000255" key="1"/>
<evidence type="ECO:0000269" key="2">
    <source>
    </source>
</evidence>
<evidence type="ECO:0000269" key="3">
    <source>
    </source>
</evidence>
<evidence type="ECO:0000269" key="4">
    <source>
    </source>
</evidence>
<evidence type="ECO:0000269" key="5">
    <source>
    </source>
</evidence>
<evidence type="ECO:0000269" key="6">
    <source>
    </source>
</evidence>
<evidence type="ECO:0000269" key="7">
    <source>
    </source>
</evidence>
<evidence type="ECO:0000269" key="8">
    <source>
    </source>
</evidence>
<evidence type="ECO:0000269" key="9">
    <source>
    </source>
</evidence>
<evidence type="ECO:0000269" key="10">
    <source>
    </source>
</evidence>
<evidence type="ECO:0000269" key="11">
    <source>
    </source>
</evidence>
<evidence type="ECO:0000269" key="12">
    <source>
    </source>
</evidence>
<evidence type="ECO:0000269" key="13">
    <source>
    </source>
</evidence>
<evidence type="ECO:0000305" key="14"/>
<evidence type="ECO:0000305" key="15">
    <source>
    </source>
</evidence>
<organism>
    <name type="scientific">Drosophila melanogaster</name>
    <name type="common">Fruit fly</name>
    <dbReference type="NCBI Taxonomy" id="7227"/>
    <lineage>
        <taxon>Eukaryota</taxon>
        <taxon>Metazoa</taxon>
        <taxon>Ecdysozoa</taxon>
        <taxon>Arthropoda</taxon>
        <taxon>Hexapoda</taxon>
        <taxon>Insecta</taxon>
        <taxon>Pterygota</taxon>
        <taxon>Neoptera</taxon>
        <taxon>Endopterygota</taxon>
        <taxon>Diptera</taxon>
        <taxon>Brachycera</taxon>
        <taxon>Muscomorpha</taxon>
        <taxon>Ephydroidea</taxon>
        <taxon>Drosophilidae</taxon>
        <taxon>Drosophila</taxon>
        <taxon>Sophophora</taxon>
    </lineage>
</organism>
<sequence length="486" mass="54413">MTTSMQPSKYTGLVADLMPNIRAMKYSGLFMHNFTGGSAFMKKVYSSVHLVFLLMQFTFILVNMALNAEEVNELSGNTITTLFFTHCITKFIYLAVNQKNFYRTLNIWNQVNTHPLFAESDARYHSIALAKMRKLFFLVMLTTVASATAWTTITFFGDSVKMVVDHETNSSIPVEIPRLPIKSFYPWNASHGMFYMISFAFQIYYVLFSMIHSNLCDVMFCSWLIFACEQLQHLKGIMKPLMELSASLDTYRPNSAALFRSLSANSKSELIHNEEKDPGTDMDMSGIYSSKADWGAQFRAPSTLQSFGGNGGGGNGLVNGANPNGLTKKQEMMVRSAIKYWVERHKHVVRLVAAIGDTYGAALLLHMLTSTIKLTLLAYQATKINGVNVYAFTVVGYLGYALAQVFHFCIFGNRLIEESSSVMEAAYSCHWYDGSEEAKTFVQIVCQQCQKAMSISGAKFFTVSLDLFASVLGAVVTYFMVLVQLK</sequence>
<protein>
    <recommendedName>
        <fullName>Odorant receptor coreceptor</fullName>
    </recommendedName>
    <alternativeName>
        <fullName>Odorant receptor 83b</fullName>
    </alternativeName>
</protein>
<reference key="1">
    <citation type="journal article" date="2004" name="Neuron">
        <title>Or83b encodes a broadly expressed odorant receptor essential for Drosophila olfaction.</title>
        <authorList>
            <person name="Larsson M.C."/>
            <person name="Domingos A.I."/>
            <person name="Jones W.D."/>
            <person name="Chiappe M.E."/>
            <person name="Amrein H."/>
            <person name="Vosshall L.B."/>
        </authorList>
    </citation>
    <scope>NUCLEOTIDE SEQUENCE [MRNA]</scope>
    <scope>FUNCTION</scope>
    <scope>TISSUE SPECIFICITY</scope>
    <scope>DEVELOPMENTAL STAGE</scope>
    <scope>VARIANT ILE-143</scope>
    <source>
        <strain>Oregon-R</strain>
        <tissue>Antenna</tissue>
        <tissue>Maxillary palp</tissue>
    </source>
</reference>
<reference key="2">
    <citation type="journal article" date="2000" name="Science">
        <title>The genome sequence of Drosophila melanogaster.</title>
        <authorList>
            <person name="Adams M.D."/>
            <person name="Celniker S.E."/>
            <person name="Holt R.A."/>
            <person name="Evans C.A."/>
            <person name="Gocayne J.D."/>
            <person name="Amanatides P.G."/>
            <person name="Scherer S.E."/>
            <person name="Li P.W."/>
            <person name="Hoskins R.A."/>
            <person name="Galle R.F."/>
            <person name="George R.A."/>
            <person name="Lewis S.E."/>
            <person name="Richards S."/>
            <person name="Ashburner M."/>
            <person name="Henderson S.N."/>
            <person name="Sutton G.G."/>
            <person name="Wortman J.R."/>
            <person name="Yandell M.D."/>
            <person name="Zhang Q."/>
            <person name="Chen L.X."/>
            <person name="Brandon R.C."/>
            <person name="Rogers Y.-H.C."/>
            <person name="Blazej R.G."/>
            <person name="Champe M."/>
            <person name="Pfeiffer B.D."/>
            <person name="Wan K.H."/>
            <person name="Doyle C."/>
            <person name="Baxter E.G."/>
            <person name="Helt G."/>
            <person name="Nelson C.R."/>
            <person name="Miklos G.L.G."/>
            <person name="Abril J.F."/>
            <person name="Agbayani A."/>
            <person name="An H.-J."/>
            <person name="Andrews-Pfannkoch C."/>
            <person name="Baldwin D."/>
            <person name="Ballew R.M."/>
            <person name="Basu A."/>
            <person name="Baxendale J."/>
            <person name="Bayraktaroglu L."/>
            <person name="Beasley E.M."/>
            <person name="Beeson K.Y."/>
            <person name="Benos P.V."/>
            <person name="Berman B.P."/>
            <person name="Bhandari D."/>
            <person name="Bolshakov S."/>
            <person name="Borkova D."/>
            <person name="Botchan M.R."/>
            <person name="Bouck J."/>
            <person name="Brokstein P."/>
            <person name="Brottier P."/>
            <person name="Burtis K.C."/>
            <person name="Busam D.A."/>
            <person name="Butler H."/>
            <person name="Cadieu E."/>
            <person name="Center A."/>
            <person name="Chandra I."/>
            <person name="Cherry J.M."/>
            <person name="Cawley S."/>
            <person name="Dahlke C."/>
            <person name="Davenport L.B."/>
            <person name="Davies P."/>
            <person name="de Pablos B."/>
            <person name="Delcher A."/>
            <person name="Deng Z."/>
            <person name="Mays A.D."/>
            <person name="Dew I."/>
            <person name="Dietz S.M."/>
            <person name="Dodson K."/>
            <person name="Doup L.E."/>
            <person name="Downes M."/>
            <person name="Dugan-Rocha S."/>
            <person name="Dunkov B.C."/>
            <person name="Dunn P."/>
            <person name="Durbin K.J."/>
            <person name="Evangelista C.C."/>
            <person name="Ferraz C."/>
            <person name="Ferriera S."/>
            <person name="Fleischmann W."/>
            <person name="Fosler C."/>
            <person name="Gabrielian A.E."/>
            <person name="Garg N.S."/>
            <person name="Gelbart W.M."/>
            <person name="Glasser K."/>
            <person name="Glodek A."/>
            <person name="Gong F."/>
            <person name="Gorrell J.H."/>
            <person name="Gu Z."/>
            <person name="Guan P."/>
            <person name="Harris M."/>
            <person name="Harris N.L."/>
            <person name="Harvey D.A."/>
            <person name="Heiman T.J."/>
            <person name="Hernandez J.R."/>
            <person name="Houck J."/>
            <person name="Hostin D."/>
            <person name="Houston K.A."/>
            <person name="Howland T.J."/>
            <person name="Wei M.-H."/>
            <person name="Ibegwam C."/>
            <person name="Jalali M."/>
            <person name="Kalush F."/>
            <person name="Karpen G.H."/>
            <person name="Ke Z."/>
            <person name="Kennison J.A."/>
            <person name="Ketchum K.A."/>
            <person name="Kimmel B.E."/>
            <person name="Kodira C.D."/>
            <person name="Kraft C.L."/>
            <person name="Kravitz S."/>
            <person name="Kulp D."/>
            <person name="Lai Z."/>
            <person name="Lasko P."/>
            <person name="Lei Y."/>
            <person name="Levitsky A.A."/>
            <person name="Li J.H."/>
            <person name="Li Z."/>
            <person name="Liang Y."/>
            <person name="Lin X."/>
            <person name="Liu X."/>
            <person name="Mattei B."/>
            <person name="McIntosh T.C."/>
            <person name="McLeod M.P."/>
            <person name="McPherson D."/>
            <person name="Merkulov G."/>
            <person name="Milshina N.V."/>
            <person name="Mobarry C."/>
            <person name="Morris J."/>
            <person name="Moshrefi A."/>
            <person name="Mount S.M."/>
            <person name="Moy M."/>
            <person name="Murphy B."/>
            <person name="Murphy L."/>
            <person name="Muzny D.M."/>
            <person name="Nelson D.L."/>
            <person name="Nelson D.R."/>
            <person name="Nelson K.A."/>
            <person name="Nixon K."/>
            <person name="Nusskern D.R."/>
            <person name="Pacleb J.M."/>
            <person name="Palazzolo M."/>
            <person name="Pittman G.S."/>
            <person name="Pan S."/>
            <person name="Pollard J."/>
            <person name="Puri V."/>
            <person name="Reese M.G."/>
            <person name="Reinert K."/>
            <person name="Remington K."/>
            <person name="Saunders R.D.C."/>
            <person name="Scheeler F."/>
            <person name="Shen H."/>
            <person name="Shue B.C."/>
            <person name="Siden-Kiamos I."/>
            <person name="Simpson M."/>
            <person name="Skupski M.P."/>
            <person name="Smith T.J."/>
            <person name="Spier E."/>
            <person name="Spradling A.C."/>
            <person name="Stapleton M."/>
            <person name="Strong R."/>
            <person name="Sun E."/>
            <person name="Svirskas R."/>
            <person name="Tector C."/>
            <person name="Turner R."/>
            <person name="Venter E."/>
            <person name="Wang A.H."/>
            <person name="Wang X."/>
            <person name="Wang Z.-Y."/>
            <person name="Wassarman D.A."/>
            <person name="Weinstock G.M."/>
            <person name="Weissenbach J."/>
            <person name="Williams S.M."/>
            <person name="Woodage T."/>
            <person name="Worley K.C."/>
            <person name="Wu D."/>
            <person name="Yang S."/>
            <person name="Yao Q.A."/>
            <person name="Ye J."/>
            <person name="Yeh R.-F."/>
            <person name="Zaveri J.S."/>
            <person name="Zhan M."/>
            <person name="Zhang G."/>
            <person name="Zhao Q."/>
            <person name="Zheng L."/>
            <person name="Zheng X.H."/>
            <person name="Zhong F.N."/>
            <person name="Zhong W."/>
            <person name="Zhou X."/>
            <person name="Zhu S.C."/>
            <person name="Zhu X."/>
            <person name="Smith H.O."/>
            <person name="Gibbs R.A."/>
            <person name="Myers E.W."/>
            <person name="Rubin G.M."/>
            <person name="Venter J.C."/>
        </authorList>
    </citation>
    <scope>NUCLEOTIDE SEQUENCE [LARGE SCALE GENOMIC DNA]</scope>
    <source>
        <strain>Berkeley</strain>
    </source>
</reference>
<reference key="3">
    <citation type="journal article" date="2002" name="Genome Biol.">
        <title>Annotation of the Drosophila melanogaster euchromatic genome: a systematic review.</title>
        <authorList>
            <person name="Misra S."/>
            <person name="Crosby M.A."/>
            <person name="Mungall C.J."/>
            <person name="Matthews B.B."/>
            <person name="Campbell K.S."/>
            <person name="Hradecky P."/>
            <person name="Huang Y."/>
            <person name="Kaminker J.S."/>
            <person name="Millburn G.H."/>
            <person name="Prochnik S.E."/>
            <person name="Smith C.D."/>
            <person name="Tupy J.L."/>
            <person name="Whitfield E.J."/>
            <person name="Bayraktaroglu L."/>
            <person name="Berman B.P."/>
            <person name="Bettencourt B.R."/>
            <person name="Celniker S.E."/>
            <person name="de Grey A.D.N.J."/>
            <person name="Drysdale R.A."/>
            <person name="Harris N.L."/>
            <person name="Richter J."/>
            <person name="Russo S."/>
            <person name="Schroeder A.J."/>
            <person name="Shu S.Q."/>
            <person name="Stapleton M."/>
            <person name="Yamada C."/>
            <person name="Ashburner M."/>
            <person name="Gelbart W.M."/>
            <person name="Rubin G.M."/>
            <person name="Lewis S.E."/>
        </authorList>
    </citation>
    <scope>GENOME REANNOTATION</scope>
    <source>
        <strain>Berkeley</strain>
    </source>
</reference>
<reference key="4">
    <citation type="journal article" date="1999" name="Cell">
        <title>A spatial map of olfactory receptor expression in the Drosophila antenna.</title>
        <authorList>
            <person name="Vosshall L.B."/>
            <person name="Amrein H."/>
            <person name="Morozov P.S."/>
            <person name="Rzhetsky A."/>
            <person name="Axel R."/>
        </authorList>
    </citation>
    <scope>TISSUE SPECIFICITY</scope>
</reference>
<reference key="5">
    <citation type="journal article" date="2000" name="Cell">
        <title>An olfactory sensory map in the fly brain.</title>
        <authorList>
            <person name="Vosshall L.B."/>
            <person name="Wong A.M."/>
            <person name="Axel R."/>
        </authorList>
    </citation>
    <scope>TISSUE SPECIFICITY</scope>
</reference>
<reference key="6">
    <citation type="journal article" date="2005" name="Nat. Neurosci.">
        <title>Odorant receptor heterodimerization in the olfactory system of Drosophila melanogaster.</title>
        <authorList>
            <person name="Neuhaus E.M."/>
            <person name="Gisselmann G."/>
            <person name="Zhang W."/>
            <person name="Dooley R."/>
            <person name="Stortkuhl K."/>
            <person name="Hatt H."/>
        </authorList>
    </citation>
    <scope>FUNCTION</scope>
    <scope>INTERACTION WITH OR22A</scope>
</reference>
<reference key="7">
    <citation type="journal article" date="2006" name="PLoS Biol.">
        <title>Atypical membrane topology and heteromeric function of Drosophila odorant receptors in vivo.</title>
        <authorList>
            <person name="Benton R."/>
            <person name="Sachse S."/>
            <person name="Michnick S.W."/>
            <person name="Vosshall L.B."/>
        </authorList>
    </citation>
    <scope>FUNCTION</scope>
    <scope>SUBCELLULAR LOCATION</scope>
    <scope>TOPOLOGY</scope>
    <scope>INTERACTION WITH ORS</scope>
    <scope>TISSUE SPECIFICITY</scope>
</reference>
<reference key="8">
    <citation type="journal article" date="2007" name="FEBS Lett.">
        <title>Membrane topology of the Drosophila OR83b odorant receptor.</title>
        <authorList>
            <person name="Lundin C."/>
            <person name="Kaell L."/>
            <person name="Kreher S.A."/>
            <person name="Kapp K."/>
            <person name="Sonnhammer E.L."/>
            <person name="Carlson J.R."/>
            <person name="von Heijne G."/>
            <person name="Nilsson I."/>
        </authorList>
    </citation>
    <scope>TOPOLOGY</scope>
    <scope>GLYCOSYLATION AT ASN-169</scope>
    <scope>MUTAGENESIS OF ASN-169</scope>
</reference>
<reference key="9">
    <citation type="journal article" date="2007" name="Nature">
        <title>An essential role for a CD36-related receptor in pheromone detection in Drosophila.</title>
        <authorList>
            <person name="Benton R."/>
            <person name="Vannice K.S."/>
            <person name="Vosshall L.B."/>
        </authorList>
    </citation>
    <scope>FUNCTION</scope>
    <scope>TISSUE SPECIFICITY</scope>
</reference>
<reference key="10">
    <citation type="journal article" date="2008" name="Nature">
        <title>Insect olfactory receptors are heteromeric ligand-gated ion channels.</title>
        <authorList>
            <person name="Sato K."/>
            <person name="Pellegrino M."/>
            <person name="Nakagawa T."/>
            <person name="Nakagawa T."/>
            <person name="Vosshall L.B."/>
            <person name="Touhara K."/>
        </authorList>
    </citation>
    <scope>FUNCTION</scope>
    <scope>INTERACTION WITH OR47A</scope>
</reference>
<reference key="11">
    <citation type="journal article" date="2008" name="Nature">
        <title>Drosophila odorant receptors are both ligand-gated and cyclic-nucleotide-activated cation channels.</title>
        <authorList>
            <person name="Wicher D."/>
            <person name="Schaefer R."/>
            <person name="Bauernfeind R."/>
            <person name="Stensmyr M.C."/>
            <person name="Heller R."/>
            <person name="Heinemann S.H."/>
            <person name="Hansson B.S."/>
        </authorList>
    </citation>
    <scope>FUNCTION</scope>
    <scope>INTERACTION WITH OR22A AND OR47A</scope>
</reference>
<reference key="12">
    <citation type="journal article" date="2010" name="J. Biol. Chem.">
        <title>Transmembrane segment 3 of Drosophila melanogaster odorant receptor subunit 85b contributes to ligand-receptor interactions.</title>
        <authorList>
            <person name="Nichols A.S."/>
            <person name="Luetje C.W."/>
        </authorList>
    </citation>
    <scope>INTERACTION WITH ORCO</scope>
    <scope>FUNCTION</scope>
</reference>
<reference key="13">
    <citation type="journal article" date="2011" name="Chem. Senses">
        <title>Subunit contributions to insect olfactory receptor function: channel block and odorant recognition.</title>
        <authorList>
            <person name="Nichols A.S."/>
            <person name="Chen S."/>
            <person name="Luetje C.W."/>
        </authorList>
    </citation>
    <scope>INTERACTION WITH OR35A AND OR67A</scope>
    <scope>FUNCTION</scope>
</reference>
<reference key="14">
    <citation type="journal article" date="2011" name="Nature">
        <title>A natural polymorphism alters odour and DEET sensitivity in an insect odorant receptor.</title>
        <authorList>
            <person name="Pellegrino M."/>
            <person name="Steinbach N."/>
            <person name="Stensmyr M.C."/>
            <person name="Hansson B.S."/>
            <person name="Vosshall L.B."/>
        </authorList>
    </citation>
    <scope>INTERACTION WITH OR59B</scope>
    <scope>FUNCTION</scope>
</reference>
<gene>
    <name type="primary">Orco</name>
    <name type="synonym">A45</name>
    <name type="synonym">Or83b</name>
    <name type="ORF">CG10609</name>
</gene>
<dbReference type="EMBL" id="AY567998">
    <property type="protein sequence ID" value="AAT71306.1"/>
    <property type="molecule type" value="mRNA"/>
</dbReference>
<dbReference type="EMBL" id="AE014297">
    <property type="protein sequence ID" value="AAF52031.2"/>
    <property type="molecule type" value="Genomic_DNA"/>
</dbReference>
<dbReference type="EMBL" id="AE014297">
    <property type="protein sequence ID" value="ABW08603.1"/>
    <property type="molecule type" value="Genomic_DNA"/>
</dbReference>
<dbReference type="RefSeq" id="NP_001097687.1">
    <property type="nucleotide sequence ID" value="NM_001104217.2"/>
</dbReference>
<dbReference type="RefSeq" id="NP_524235.2">
    <property type="nucleotide sequence ID" value="NM_079511.5"/>
</dbReference>
<dbReference type="SMR" id="Q9VNB5"/>
<dbReference type="BioGRID" id="65859">
    <property type="interactions" value="71"/>
</dbReference>
<dbReference type="DIP" id="DIP-29174N"/>
<dbReference type="FunCoup" id="Q9VNB5">
    <property type="interactions" value="32"/>
</dbReference>
<dbReference type="IntAct" id="Q9VNB5">
    <property type="interactions" value="2"/>
</dbReference>
<dbReference type="STRING" id="7227.FBpp0078438"/>
<dbReference type="TCDB" id="1.A.69.1.1">
    <property type="family name" value="the heteromeric odorant receptor channel (horc) family"/>
</dbReference>
<dbReference type="GlyCosmos" id="Q9VNB5">
    <property type="glycosylation" value="2 sites, No reported glycans"/>
</dbReference>
<dbReference type="GlyGen" id="Q9VNB5">
    <property type="glycosylation" value="2 sites"/>
</dbReference>
<dbReference type="iPTMnet" id="Q9VNB5"/>
<dbReference type="PaxDb" id="7227-FBpp0112105"/>
<dbReference type="DNASU" id="40650"/>
<dbReference type="EnsemblMetazoa" id="FBtr0078794">
    <property type="protein sequence ID" value="FBpp0078438"/>
    <property type="gene ID" value="FBgn0037324"/>
</dbReference>
<dbReference type="EnsemblMetazoa" id="FBtr0113193">
    <property type="protein sequence ID" value="FBpp0112105"/>
    <property type="gene ID" value="FBgn0037324"/>
</dbReference>
<dbReference type="GeneID" id="40650"/>
<dbReference type="KEGG" id="dme:Dmel_CG10609"/>
<dbReference type="UCSC" id="CG10609-RB">
    <property type="organism name" value="d. melanogaster"/>
</dbReference>
<dbReference type="AGR" id="FB:FBgn0037324"/>
<dbReference type="CTD" id="40650"/>
<dbReference type="FlyBase" id="FBgn0037324">
    <property type="gene designation" value="Orco"/>
</dbReference>
<dbReference type="VEuPathDB" id="VectorBase:FBgn0037324"/>
<dbReference type="eggNOG" id="ENOG502QR02">
    <property type="taxonomic scope" value="Eukaryota"/>
</dbReference>
<dbReference type="HOGENOM" id="CLU_045605_0_0_1"/>
<dbReference type="InParanoid" id="Q9VNB5"/>
<dbReference type="OMA" id="VERHKHI"/>
<dbReference type="OrthoDB" id="8175157at2759"/>
<dbReference type="PhylomeDB" id="Q9VNB5"/>
<dbReference type="BioGRID-ORCS" id="40650">
    <property type="hits" value="0 hits in 1 CRISPR screen"/>
</dbReference>
<dbReference type="ChiTaRS" id="Orco">
    <property type="organism name" value="fly"/>
</dbReference>
<dbReference type="GenomeRNAi" id="40650"/>
<dbReference type="PRO" id="PR:Q9VNB5"/>
<dbReference type="Proteomes" id="UP000000803">
    <property type="component" value="Chromosome 3R"/>
</dbReference>
<dbReference type="Bgee" id="FBgn0037324">
    <property type="expression patterns" value="Expressed in adult olfactory receptor neuron Or92a (Drosophila) in antenna and 30 other cell types or tissues"/>
</dbReference>
<dbReference type="ExpressionAtlas" id="Q9VNB5">
    <property type="expression patterns" value="baseline and differential"/>
</dbReference>
<dbReference type="GO" id="GO:0034703">
    <property type="term" value="C:cation channel complex"/>
    <property type="evidence" value="ECO:0000314"/>
    <property type="project" value="FlyBase"/>
</dbReference>
<dbReference type="GO" id="GO:0005929">
    <property type="term" value="C:cilium"/>
    <property type="evidence" value="ECO:0000314"/>
    <property type="project" value="FlyBase"/>
</dbReference>
<dbReference type="GO" id="GO:0030425">
    <property type="term" value="C:dendrite"/>
    <property type="evidence" value="ECO:0000314"/>
    <property type="project" value="FlyBase"/>
</dbReference>
<dbReference type="GO" id="GO:0032590">
    <property type="term" value="C:dendrite membrane"/>
    <property type="evidence" value="ECO:0000250"/>
    <property type="project" value="FlyBase"/>
</dbReference>
<dbReference type="GO" id="GO:0005886">
    <property type="term" value="C:plasma membrane"/>
    <property type="evidence" value="ECO:0000314"/>
    <property type="project" value="FlyBase"/>
</dbReference>
<dbReference type="GO" id="GO:0005516">
    <property type="term" value="F:calmodulin binding"/>
    <property type="evidence" value="ECO:0000315"/>
    <property type="project" value="FlyBase"/>
</dbReference>
<dbReference type="GO" id="GO:0015026">
    <property type="term" value="F:coreceptor activity"/>
    <property type="evidence" value="ECO:0000315"/>
    <property type="project" value="FlyBase"/>
</dbReference>
<dbReference type="GO" id="GO:0015278">
    <property type="term" value="F:intracellularly gated calcium channel activity"/>
    <property type="evidence" value="ECO:0000314"/>
    <property type="project" value="FlyBase"/>
</dbReference>
<dbReference type="GO" id="GO:0170020">
    <property type="term" value="F:ionotropic olfactory receptor activity"/>
    <property type="evidence" value="ECO:0000314"/>
    <property type="project" value="FlyBase"/>
</dbReference>
<dbReference type="GO" id="GO:0005549">
    <property type="term" value="F:odorant binding"/>
    <property type="evidence" value="ECO:0000353"/>
    <property type="project" value="FlyBase"/>
</dbReference>
<dbReference type="GO" id="GO:0004984">
    <property type="term" value="F:olfactory receptor activity"/>
    <property type="evidence" value="ECO:0000314"/>
    <property type="project" value="FlyBase"/>
</dbReference>
<dbReference type="GO" id="GO:0042803">
    <property type="term" value="F:protein homodimerization activity"/>
    <property type="evidence" value="ECO:0000353"/>
    <property type="project" value="FlyBase"/>
</dbReference>
<dbReference type="GO" id="GO:0048149">
    <property type="term" value="P:behavioral response to ethanol"/>
    <property type="evidence" value="ECO:0000315"/>
    <property type="project" value="FlyBase"/>
</dbReference>
<dbReference type="GO" id="GO:0050911">
    <property type="term" value="P:detection of chemical stimulus involved in sensory perception of smell"/>
    <property type="evidence" value="ECO:0000314"/>
    <property type="project" value="FlyBase"/>
</dbReference>
<dbReference type="GO" id="GO:0042048">
    <property type="term" value="P:olfactory behavior"/>
    <property type="evidence" value="ECO:0000315"/>
    <property type="project" value="FlyBase"/>
</dbReference>
<dbReference type="GO" id="GO:0032880">
    <property type="term" value="P:regulation of protein localization"/>
    <property type="evidence" value="ECO:0000315"/>
    <property type="project" value="FlyBase"/>
</dbReference>
<dbReference type="GO" id="GO:0019236">
    <property type="term" value="P:response to pheromone"/>
    <property type="evidence" value="ECO:0000315"/>
    <property type="project" value="FlyBase"/>
</dbReference>
<dbReference type="GO" id="GO:0007608">
    <property type="term" value="P:sensory perception of smell"/>
    <property type="evidence" value="ECO:0000304"/>
    <property type="project" value="FlyBase"/>
</dbReference>
<dbReference type="InterPro" id="IPR004117">
    <property type="entry name" value="7tm6_olfct_rcpt"/>
</dbReference>
<dbReference type="PANTHER" id="PTHR21137">
    <property type="entry name" value="ODORANT RECEPTOR"/>
    <property type="match status" value="1"/>
</dbReference>
<dbReference type="PANTHER" id="PTHR21137:SF9">
    <property type="entry name" value="ODORANT RECEPTOR CORECEPTOR"/>
    <property type="match status" value="1"/>
</dbReference>
<dbReference type="Pfam" id="PF02949">
    <property type="entry name" value="7tm_6"/>
    <property type="match status" value="1"/>
</dbReference>